<protein>
    <recommendedName>
        <fullName evidence="1">Multidrug resistance protein MdtH</fullName>
    </recommendedName>
</protein>
<proteinExistence type="inferred from homology"/>
<reference key="1">
    <citation type="submission" date="2007-11" db="EMBL/GenBank/DDBJ databases">
        <authorList>
            <consortium name="The Salmonella enterica serovar Arizonae Genome Sequencing Project"/>
            <person name="McClelland M."/>
            <person name="Sanderson E.K."/>
            <person name="Porwollik S."/>
            <person name="Spieth J."/>
            <person name="Clifton W.S."/>
            <person name="Fulton R."/>
            <person name="Chunyan W."/>
            <person name="Wollam A."/>
            <person name="Shah N."/>
            <person name="Pepin K."/>
            <person name="Bhonagiri V."/>
            <person name="Nash W."/>
            <person name="Johnson M."/>
            <person name="Thiruvilangam P."/>
            <person name="Wilson R."/>
        </authorList>
    </citation>
    <scope>NUCLEOTIDE SEQUENCE [LARGE SCALE GENOMIC DNA]</scope>
    <source>
        <strain>ATCC BAA-731 / CDC346-86 / RSK2980</strain>
    </source>
</reference>
<dbReference type="EMBL" id="CP000880">
    <property type="protein sequence ID" value="ABX21716.1"/>
    <property type="molecule type" value="Genomic_DNA"/>
</dbReference>
<dbReference type="SMR" id="A9MGZ7"/>
<dbReference type="STRING" id="41514.SARI_01831"/>
<dbReference type="KEGG" id="ses:SARI_01831"/>
<dbReference type="HOGENOM" id="CLU_001265_60_2_6"/>
<dbReference type="Proteomes" id="UP000002084">
    <property type="component" value="Chromosome"/>
</dbReference>
<dbReference type="GO" id="GO:0005886">
    <property type="term" value="C:plasma membrane"/>
    <property type="evidence" value="ECO:0007669"/>
    <property type="project" value="UniProtKB-SubCell"/>
</dbReference>
<dbReference type="GO" id="GO:0022857">
    <property type="term" value="F:transmembrane transporter activity"/>
    <property type="evidence" value="ECO:0007669"/>
    <property type="project" value="UniProtKB-UniRule"/>
</dbReference>
<dbReference type="CDD" id="cd17329">
    <property type="entry name" value="MFS_MdtH_MDR_like"/>
    <property type="match status" value="1"/>
</dbReference>
<dbReference type="FunFam" id="1.20.1250.20:FF:000039">
    <property type="entry name" value="Multidrug resistance protein MdtH"/>
    <property type="match status" value="1"/>
</dbReference>
<dbReference type="Gene3D" id="1.20.1250.20">
    <property type="entry name" value="MFS general substrate transporter like domains"/>
    <property type="match status" value="1"/>
</dbReference>
<dbReference type="HAMAP" id="MF_01529">
    <property type="entry name" value="MFS_MdtH"/>
    <property type="match status" value="1"/>
</dbReference>
<dbReference type="InterPro" id="IPR011701">
    <property type="entry name" value="MFS"/>
</dbReference>
<dbReference type="InterPro" id="IPR020846">
    <property type="entry name" value="MFS_dom"/>
</dbReference>
<dbReference type="InterPro" id="IPR036259">
    <property type="entry name" value="MFS_trans_sf"/>
</dbReference>
<dbReference type="InterPro" id="IPR050171">
    <property type="entry name" value="MFS_Transporters"/>
</dbReference>
<dbReference type="InterPro" id="IPR022855">
    <property type="entry name" value="Multidrug-R_MdtH"/>
</dbReference>
<dbReference type="NCBIfam" id="NF008650">
    <property type="entry name" value="PRK11646.1"/>
    <property type="match status" value="1"/>
</dbReference>
<dbReference type="PANTHER" id="PTHR23517:SF2">
    <property type="entry name" value="MULTIDRUG RESISTANCE PROTEIN MDTH"/>
    <property type="match status" value="1"/>
</dbReference>
<dbReference type="PANTHER" id="PTHR23517">
    <property type="entry name" value="RESISTANCE PROTEIN MDTM, PUTATIVE-RELATED-RELATED"/>
    <property type="match status" value="1"/>
</dbReference>
<dbReference type="Pfam" id="PF07690">
    <property type="entry name" value="MFS_1"/>
    <property type="match status" value="1"/>
</dbReference>
<dbReference type="SUPFAM" id="SSF103473">
    <property type="entry name" value="MFS general substrate transporter"/>
    <property type="match status" value="1"/>
</dbReference>
<dbReference type="PROSITE" id="PS50850">
    <property type="entry name" value="MFS"/>
    <property type="match status" value="1"/>
</dbReference>
<evidence type="ECO:0000255" key="1">
    <source>
        <dbReference type="HAMAP-Rule" id="MF_01529"/>
    </source>
</evidence>
<organism>
    <name type="scientific">Salmonella arizonae (strain ATCC BAA-731 / CDC346-86 / RSK2980)</name>
    <dbReference type="NCBI Taxonomy" id="41514"/>
    <lineage>
        <taxon>Bacteria</taxon>
        <taxon>Pseudomonadati</taxon>
        <taxon>Pseudomonadota</taxon>
        <taxon>Gammaproteobacteria</taxon>
        <taxon>Enterobacterales</taxon>
        <taxon>Enterobacteriaceae</taxon>
        <taxon>Salmonella</taxon>
    </lineage>
</organism>
<feature type="chain" id="PRO_1000087589" description="Multidrug resistance protein MdtH">
    <location>
        <begin position="1"/>
        <end position="404"/>
    </location>
</feature>
<feature type="topological domain" description="Cytoplasmic" evidence="1">
    <location>
        <begin position="1"/>
        <end position="12"/>
    </location>
</feature>
<feature type="transmembrane region" description="Helical" evidence="1">
    <location>
        <begin position="13"/>
        <end position="33"/>
    </location>
</feature>
<feature type="topological domain" description="Periplasmic" evidence="1">
    <location>
        <begin position="34"/>
        <end position="98"/>
    </location>
</feature>
<feature type="transmembrane region" description="Helical" evidence="1">
    <location>
        <begin position="99"/>
        <end position="116"/>
    </location>
</feature>
<feature type="topological domain" description="Cytoplasmic" evidence="1">
    <location>
        <begin position="117"/>
        <end position="138"/>
    </location>
</feature>
<feature type="transmembrane region" description="Helical" evidence="1">
    <location>
        <begin position="139"/>
        <end position="159"/>
    </location>
</feature>
<feature type="topological domain" description="Periplasmic" evidence="1">
    <location>
        <begin position="160"/>
        <end position="164"/>
    </location>
</feature>
<feature type="transmembrane region" description="Helical" evidence="1">
    <location>
        <begin position="165"/>
        <end position="185"/>
    </location>
</feature>
<feature type="topological domain" description="Cytoplasmic" evidence="1">
    <location>
        <begin position="186"/>
        <end position="213"/>
    </location>
</feature>
<feature type="transmembrane region" description="Helical" evidence="1">
    <location>
        <begin position="214"/>
        <end position="234"/>
    </location>
</feature>
<feature type="topological domain" description="Periplasmic" evidence="1">
    <location>
        <begin position="235"/>
        <end position="243"/>
    </location>
</feature>
<feature type="transmembrane region" description="Helical" evidence="1">
    <location>
        <begin position="244"/>
        <end position="264"/>
    </location>
</feature>
<feature type="topological domain" description="Cytoplasmic" evidence="1">
    <location>
        <begin position="265"/>
        <end position="276"/>
    </location>
</feature>
<feature type="transmembrane region" description="Helical" evidence="1">
    <location>
        <begin position="277"/>
        <end position="297"/>
    </location>
</feature>
<feature type="topological domain" description="Periplasmic" evidence="1">
    <location>
        <begin position="298"/>
        <end position="299"/>
    </location>
</feature>
<feature type="transmembrane region" description="Helical" evidence="1">
    <location>
        <begin position="300"/>
        <end position="320"/>
    </location>
</feature>
<feature type="topological domain" description="Cytoplasmic" evidence="1">
    <location>
        <begin position="321"/>
        <end position="339"/>
    </location>
</feature>
<feature type="transmembrane region" description="Helical" evidence="1">
    <location>
        <begin position="340"/>
        <end position="360"/>
    </location>
</feature>
<feature type="topological domain" description="Periplasmic" evidence="1">
    <location>
        <begin position="361"/>
        <end position="367"/>
    </location>
</feature>
<feature type="transmembrane region" description="Helical" evidence="1">
    <location>
        <begin position="368"/>
        <end position="388"/>
    </location>
</feature>
<feature type="topological domain" description="Cytoplasmic" evidence="1">
    <location>
        <begin position="389"/>
        <end position="404"/>
    </location>
</feature>
<sequence length="404" mass="44701">MSRVSQARNLGKYFLLIDNMLVVLGFFVVFPLISIRFVDQMGWAAVMVGIALGLRQFIQQGLGIFGGAIADRFGAKPMIVTGMLMRAAGFATMGIAHEPWLLWFSCFLSGLGGTLFDPPRSALVVKLIRPEQRGRFFSLLMMQDSAGAVIGALLGSWLLQYDFRLVCAMGAILFIVCAIFNAWLLPAWKLSTVRTPVREGMRRVISDKRFVTYVLTLAGYYMLAVQVMLMLPIMVNDVAGSPAAVKWMYAIEACLSLTLLYPIARWSEKRFRLEHRLMAGLLIMSLSMIPIGLAGNLQQLFTLICAFYIGSVIAEPARETLSASLTDARARGSYMGFSRLGLAIGGAIGYIGGGWLFDMGKTLAQPELPWMMLGIIGFITFLALGWQFSHKRTPRQYTGARRLI</sequence>
<gene>
    <name evidence="1" type="primary">mdtH</name>
    <name type="ordered locus">SARI_01831</name>
</gene>
<accession>A9MGZ7</accession>
<keyword id="KW-0997">Cell inner membrane</keyword>
<keyword id="KW-1003">Cell membrane</keyword>
<keyword id="KW-0472">Membrane</keyword>
<keyword id="KW-1185">Reference proteome</keyword>
<keyword id="KW-0812">Transmembrane</keyword>
<keyword id="KW-1133">Transmembrane helix</keyword>
<keyword id="KW-0813">Transport</keyword>
<name>MDTH_SALAR</name>
<comment type="subcellular location">
    <subcellularLocation>
        <location evidence="1">Cell inner membrane</location>
        <topology evidence="1">Multi-pass membrane protein</topology>
    </subcellularLocation>
</comment>
<comment type="similarity">
    <text evidence="1">Belongs to the major facilitator superfamily. DHA1 family. MdtH (TC 2.A.1.2.21) subfamily.</text>
</comment>